<organism>
    <name type="scientific">Drosophila mojavensis</name>
    <name type="common">Fruit fly</name>
    <dbReference type="NCBI Taxonomy" id="7230"/>
    <lineage>
        <taxon>Eukaryota</taxon>
        <taxon>Metazoa</taxon>
        <taxon>Ecdysozoa</taxon>
        <taxon>Arthropoda</taxon>
        <taxon>Hexapoda</taxon>
        <taxon>Insecta</taxon>
        <taxon>Pterygota</taxon>
        <taxon>Neoptera</taxon>
        <taxon>Endopterygota</taxon>
        <taxon>Diptera</taxon>
        <taxon>Brachycera</taxon>
        <taxon>Muscomorpha</taxon>
        <taxon>Ephydroidea</taxon>
        <taxon>Drosophilidae</taxon>
        <taxon>Drosophila</taxon>
    </lineage>
</organism>
<accession>B4KLL0</accession>
<sequence>MPIDCKAKCGNRASLKRPKTGDALCKDCFFAAFEAEIHHTITTSKLFRRGEKVAVAASGGKDSTVLAHVLKLLNERHNYGLDLVLLSIDEGITGYRDDSLETVKQNRDDYQMPLKILSYEELYGWTMDRIVAQIGRSNNCTFCGVFRRQALDRGAKLLGVDSIATGHNADDIAETVLMNILRGDTARLRRCTDIRTGGGEDSIPRVKPLKYSYEKEIVMYAHYKKLVYFSTECVFAPNAYRGHARAFLKDLEKVRPSVIMDIIYSGEQLRFKDTVKKPVRGNCERCGFVSSQQPCKACVLLEGLNRGLPKLGIGKKSKGDRMIAKQNQELALRERANLVKNDF</sequence>
<gene>
    <name type="ORF">GI19452</name>
</gene>
<feature type="chain" id="PRO_0000368249" description="Cytoplasmic tRNA 2-thiolation protein 1">
    <location>
        <begin position="1"/>
        <end position="343"/>
    </location>
</feature>
<protein>
    <recommendedName>
        <fullName evidence="1">Cytoplasmic tRNA 2-thiolation protein 1</fullName>
        <ecNumber evidence="1">2.7.7.-</ecNumber>
    </recommendedName>
    <alternativeName>
        <fullName evidence="1">Cytoplasmic tRNA adenylyltransferase 1</fullName>
    </alternativeName>
</protein>
<dbReference type="EC" id="2.7.7.-" evidence="1"/>
<dbReference type="EMBL" id="CH933808">
    <property type="protein sequence ID" value="EDW08646.1"/>
    <property type="molecule type" value="Genomic_DNA"/>
</dbReference>
<dbReference type="SMR" id="B4KLL0"/>
<dbReference type="FunCoup" id="B4KLL0">
    <property type="interactions" value="436"/>
</dbReference>
<dbReference type="EnsemblMetazoa" id="FBtr0170177">
    <property type="protein sequence ID" value="FBpp0168669"/>
    <property type="gene ID" value="FBgn0142190"/>
</dbReference>
<dbReference type="EnsemblMetazoa" id="XM_002004675.4">
    <property type="protein sequence ID" value="XP_002004711.1"/>
    <property type="gene ID" value="LOC6578808"/>
</dbReference>
<dbReference type="GeneID" id="6578808"/>
<dbReference type="CTD" id="90353"/>
<dbReference type="eggNOG" id="KOG2840">
    <property type="taxonomic scope" value="Eukaryota"/>
</dbReference>
<dbReference type="HOGENOM" id="CLU_026481_1_2_1"/>
<dbReference type="InParanoid" id="B4KLL0"/>
<dbReference type="OMA" id="KPVRGIC"/>
<dbReference type="OrthoDB" id="198857at2759"/>
<dbReference type="PhylomeDB" id="B4KLL0"/>
<dbReference type="UniPathway" id="UPA00988"/>
<dbReference type="Proteomes" id="UP000009192">
    <property type="component" value="Unassembled WGS sequence"/>
</dbReference>
<dbReference type="GO" id="GO:0005829">
    <property type="term" value="C:cytosol"/>
    <property type="evidence" value="ECO:0000250"/>
    <property type="project" value="UniProtKB"/>
</dbReference>
<dbReference type="GO" id="GO:0002144">
    <property type="term" value="C:cytosolic tRNA wobble base thiouridylase complex"/>
    <property type="evidence" value="ECO:0007669"/>
    <property type="project" value="TreeGrafter"/>
</dbReference>
<dbReference type="GO" id="GO:0005739">
    <property type="term" value="C:mitochondrion"/>
    <property type="evidence" value="ECO:0007669"/>
    <property type="project" value="TreeGrafter"/>
</dbReference>
<dbReference type="GO" id="GO:0016779">
    <property type="term" value="F:nucleotidyltransferase activity"/>
    <property type="evidence" value="ECO:0007669"/>
    <property type="project" value="UniProtKB-UniRule"/>
</dbReference>
<dbReference type="GO" id="GO:0000049">
    <property type="term" value="F:tRNA binding"/>
    <property type="evidence" value="ECO:0000250"/>
    <property type="project" value="UniProtKB"/>
</dbReference>
<dbReference type="GO" id="GO:0032447">
    <property type="term" value="P:protein urmylation"/>
    <property type="evidence" value="ECO:0007669"/>
    <property type="project" value="UniProtKB-UniRule"/>
</dbReference>
<dbReference type="GO" id="GO:0034227">
    <property type="term" value="P:tRNA thio-modification"/>
    <property type="evidence" value="ECO:0000250"/>
    <property type="project" value="UniProtKB"/>
</dbReference>
<dbReference type="GO" id="GO:0002143">
    <property type="term" value="P:tRNA wobble position uridine thiolation"/>
    <property type="evidence" value="ECO:0007669"/>
    <property type="project" value="TreeGrafter"/>
</dbReference>
<dbReference type="GO" id="GO:0002098">
    <property type="term" value="P:tRNA wobble uridine modification"/>
    <property type="evidence" value="ECO:0000250"/>
    <property type="project" value="UniProtKB"/>
</dbReference>
<dbReference type="CDD" id="cd01713">
    <property type="entry name" value="CTU1-like"/>
    <property type="match status" value="1"/>
</dbReference>
<dbReference type="FunFam" id="3.40.50.620:FF:000054">
    <property type="entry name" value="Cytoplasmic tRNA 2-thiolation protein 1"/>
    <property type="match status" value="1"/>
</dbReference>
<dbReference type="Gene3D" id="3.40.50.620">
    <property type="entry name" value="HUPs"/>
    <property type="match status" value="1"/>
</dbReference>
<dbReference type="HAMAP" id="MF_03053">
    <property type="entry name" value="CTU1"/>
    <property type="match status" value="1"/>
</dbReference>
<dbReference type="InterPro" id="IPR056369">
    <property type="entry name" value="CTU1-like_ATP-bd"/>
</dbReference>
<dbReference type="InterPro" id="IPR032442">
    <property type="entry name" value="CTU1_C"/>
</dbReference>
<dbReference type="InterPro" id="IPR000541">
    <property type="entry name" value="Ncs6/Tuc1/Ctu1"/>
</dbReference>
<dbReference type="InterPro" id="IPR014729">
    <property type="entry name" value="Rossmann-like_a/b/a_fold"/>
</dbReference>
<dbReference type="InterPro" id="IPR011063">
    <property type="entry name" value="TilS/TtcA_N"/>
</dbReference>
<dbReference type="InterPro" id="IPR035107">
    <property type="entry name" value="tRNA_thiolation_TtcA_Ctu1"/>
</dbReference>
<dbReference type="InterPro" id="IPR020554">
    <property type="entry name" value="UPF0021_CS"/>
</dbReference>
<dbReference type="NCBIfam" id="TIGR00269">
    <property type="entry name" value="TIGR00269 family protein"/>
    <property type="match status" value="1"/>
</dbReference>
<dbReference type="PANTHER" id="PTHR11807">
    <property type="entry name" value="ATPASES OF THE PP SUPERFAMILY-RELATED"/>
    <property type="match status" value="1"/>
</dbReference>
<dbReference type="PANTHER" id="PTHR11807:SF12">
    <property type="entry name" value="CYTOPLASMIC TRNA 2-THIOLATION PROTEIN 1"/>
    <property type="match status" value="1"/>
</dbReference>
<dbReference type="Pfam" id="PF01171">
    <property type="entry name" value="ATP_bind_3"/>
    <property type="match status" value="1"/>
</dbReference>
<dbReference type="Pfam" id="PF16503">
    <property type="entry name" value="zn-ribbon_14"/>
    <property type="match status" value="1"/>
</dbReference>
<dbReference type="PIRSF" id="PIRSF004976">
    <property type="entry name" value="ATPase_YdaO"/>
    <property type="match status" value="1"/>
</dbReference>
<dbReference type="SUPFAM" id="SSF52402">
    <property type="entry name" value="Adenine nucleotide alpha hydrolases-like"/>
    <property type="match status" value="1"/>
</dbReference>
<dbReference type="PROSITE" id="PS01263">
    <property type="entry name" value="UPF0021"/>
    <property type="match status" value="1"/>
</dbReference>
<comment type="function">
    <text evidence="1">Plays a central role in 2-thiolation of mcm(5)S(2)U at tRNA wobble positions of tRNA(Lys), tRNA(Glu) and tRNA(Gln). Directly binds tRNAs and probably acts by catalyzing adenylation of tRNAs, an intermediate required for 2-thiolation. It is unclear whether it acts as a sulfurtransferase that transfers sulfur from thiocarboxylated URM1 onto the uridine of tRNAs at wobble position.</text>
</comment>
<comment type="pathway">
    <text evidence="1">tRNA modification; 5-methoxycarbonylmethyl-2-thiouridine-tRNA biosynthesis.</text>
</comment>
<comment type="subcellular location">
    <subcellularLocation>
        <location evidence="1">Cytoplasm</location>
    </subcellularLocation>
</comment>
<comment type="similarity">
    <text evidence="1">Belongs to the TtcA family. CTU1/NCS6/ATPBD3 subfamily.</text>
</comment>
<reference key="1">
    <citation type="journal article" date="2007" name="Nature">
        <title>Evolution of genes and genomes on the Drosophila phylogeny.</title>
        <authorList>
            <consortium name="Drosophila 12 genomes consortium"/>
        </authorList>
    </citation>
    <scope>NUCLEOTIDE SEQUENCE [LARGE SCALE GENOMIC DNA]</scope>
    <source>
        <strain>Tucson 15081-1352.22</strain>
    </source>
</reference>
<evidence type="ECO:0000255" key="1">
    <source>
        <dbReference type="HAMAP-Rule" id="MF_03053"/>
    </source>
</evidence>
<name>CTU1_DROMO</name>
<keyword id="KW-0963">Cytoplasm</keyword>
<keyword id="KW-1185">Reference proteome</keyword>
<keyword id="KW-0694">RNA-binding</keyword>
<keyword id="KW-0808">Transferase</keyword>
<keyword id="KW-0819">tRNA processing</keyword>
<keyword id="KW-0820">tRNA-binding</keyword>
<proteinExistence type="inferred from homology"/>